<keyword id="KW-0007">Acetylation</keyword>
<keyword id="KW-0143">Chaperone</keyword>
<keyword id="KW-0597">Phosphoprotein</keyword>
<keyword id="KW-1185">Reference proteome</keyword>
<keyword id="KW-0677">Repeat</keyword>
<keyword id="KW-0802">TPR repeat</keyword>
<feature type="chain" id="PRO_0000106369" description="Small glutamine-rich tetratricopeptide repeat-containing protein beta">
    <location>
        <begin position="1"/>
        <end position="304"/>
    </location>
</feature>
<feature type="repeat" description="TPR 1">
    <location>
        <begin position="15"/>
        <end position="49"/>
    </location>
</feature>
<feature type="repeat" description="TPR 2">
    <location>
        <begin position="85"/>
        <end position="118"/>
    </location>
</feature>
<feature type="repeat" description="TPR 3">
    <location>
        <begin position="120"/>
        <end position="152"/>
    </location>
</feature>
<feature type="repeat" description="TPR 4">
    <location>
        <begin position="153"/>
        <end position="186"/>
    </location>
</feature>
<feature type="modified residue" description="N6-acetyllysine" evidence="2">
    <location>
        <position position="131"/>
    </location>
</feature>
<feature type="modified residue" description="Phosphoserine" evidence="2">
    <location>
        <position position="293"/>
    </location>
</feature>
<feature type="modified residue" description="Phosphoserine" evidence="3">
    <location>
        <position position="295"/>
    </location>
</feature>
<feature type="modified residue" description="Phosphoserine" evidence="3">
    <location>
        <position position="297"/>
    </location>
</feature>
<organism>
    <name type="scientific">Mus musculus</name>
    <name type="common">Mouse</name>
    <dbReference type="NCBI Taxonomy" id="10090"/>
    <lineage>
        <taxon>Eukaryota</taxon>
        <taxon>Metazoa</taxon>
        <taxon>Chordata</taxon>
        <taxon>Craniata</taxon>
        <taxon>Vertebrata</taxon>
        <taxon>Euteleostomi</taxon>
        <taxon>Mammalia</taxon>
        <taxon>Eutheria</taxon>
        <taxon>Euarchontoglires</taxon>
        <taxon>Glires</taxon>
        <taxon>Rodentia</taxon>
        <taxon>Myomorpha</taxon>
        <taxon>Muroidea</taxon>
        <taxon>Muridae</taxon>
        <taxon>Murinae</taxon>
        <taxon>Mus</taxon>
        <taxon>Mus</taxon>
    </lineage>
</organism>
<comment type="function">
    <text evidence="1">Co-chaperone that binds directly to HSC70 and HSP70 and regulates their ATPase activity.</text>
</comment>
<comment type="subunit">
    <text evidence="1">Homooligomerize.</text>
</comment>
<comment type="similarity">
    <text evidence="4">Belongs to the SGT family.</text>
</comment>
<sequence>MSSVKPLVYAVIRFLREQSQMDAYTSDEQESLEVAIQCLETVFKISPEDTHLAVSQPLTEMFTNSVCKNDIRPLSNSVPEDVGKADQLKDEGNNHMKEENYAAAVDCYTQAIELDPNNAVYYCNRAAAQSKLSHYTDAIKDCEKAIAIDSKYSKAYGRMGLALTAMNKFEEAVTSYQKALDLDPENDSYKSNLKIAEQKLREVSSPTGTGLSFDMASLINNPAFITMAASLMQNPQVQQLMSGMMTNAIGGPAAGVGGLTDLSSLIQAGQQFAQQIQQQNPELIEQLRNHIRSRSFSSSADEHS</sequence>
<reference key="1">
    <citation type="journal article" date="2005" name="Science">
        <title>The transcriptional landscape of the mammalian genome.</title>
        <authorList>
            <person name="Carninci P."/>
            <person name="Kasukawa T."/>
            <person name="Katayama S."/>
            <person name="Gough J."/>
            <person name="Frith M.C."/>
            <person name="Maeda N."/>
            <person name="Oyama R."/>
            <person name="Ravasi T."/>
            <person name="Lenhard B."/>
            <person name="Wells C."/>
            <person name="Kodzius R."/>
            <person name="Shimokawa K."/>
            <person name="Bajic V.B."/>
            <person name="Brenner S.E."/>
            <person name="Batalov S."/>
            <person name="Forrest A.R."/>
            <person name="Zavolan M."/>
            <person name="Davis M.J."/>
            <person name="Wilming L.G."/>
            <person name="Aidinis V."/>
            <person name="Allen J.E."/>
            <person name="Ambesi-Impiombato A."/>
            <person name="Apweiler R."/>
            <person name="Aturaliya R.N."/>
            <person name="Bailey T.L."/>
            <person name="Bansal M."/>
            <person name="Baxter L."/>
            <person name="Beisel K.W."/>
            <person name="Bersano T."/>
            <person name="Bono H."/>
            <person name="Chalk A.M."/>
            <person name="Chiu K.P."/>
            <person name="Choudhary V."/>
            <person name="Christoffels A."/>
            <person name="Clutterbuck D.R."/>
            <person name="Crowe M.L."/>
            <person name="Dalla E."/>
            <person name="Dalrymple B.P."/>
            <person name="de Bono B."/>
            <person name="Della Gatta G."/>
            <person name="di Bernardo D."/>
            <person name="Down T."/>
            <person name="Engstrom P."/>
            <person name="Fagiolini M."/>
            <person name="Faulkner G."/>
            <person name="Fletcher C.F."/>
            <person name="Fukushima T."/>
            <person name="Furuno M."/>
            <person name="Futaki S."/>
            <person name="Gariboldi M."/>
            <person name="Georgii-Hemming P."/>
            <person name="Gingeras T.R."/>
            <person name="Gojobori T."/>
            <person name="Green R.E."/>
            <person name="Gustincich S."/>
            <person name="Harbers M."/>
            <person name="Hayashi Y."/>
            <person name="Hensch T.K."/>
            <person name="Hirokawa N."/>
            <person name="Hill D."/>
            <person name="Huminiecki L."/>
            <person name="Iacono M."/>
            <person name="Ikeo K."/>
            <person name="Iwama A."/>
            <person name="Ishikawa T."/>
            <person name="Jakt M."/>
            <person name="Kanapin A."/>
            <person name="Katoh M."/>
            <person name="Kawasawa Y."/>
            <person name="Kelso J."/>
            <person name="Kitamura H."/>
            <person name="Kitano H."/>
            <person name="Kollias G."/>
            <person name="Krishnan S.P."/>
            <person name="Kruger A."/>
            <person name="Kummerfeld S.K."/>
            <person name="Kurochkin I.V."/>
            <person name="Lareau L.F."/>
            <person name="Lazarevic D."/>
            <person name="Lipovich L."/>
            <person name="Liu J."/>
            <person name="Liuni S."/>
            <person name="McWilliam S."/>
            <person name="Madan Babu M."/>
            <person name="Madera M."/>
            <person name="Marchionni L."/>
            <person name="Matsuda H."/>
            <person name="Matsuzawa S."/>
            <person name="Miki H."/>
            <person name="Mignone F."/>
            <person name="Miyake S."/>
            <person name="Morris K."/>
            <person name="Mottagui-Tabar S."/>
            <person name="Mulder N."/>
            <person name="Nakano N."/>
            <person name="Nakauchi H."/>
            <person name="Ng P."/>
            <person name="Nilsson R."/>
            <person name="Nishiguchi S."/>
            <person name="Nishikawa S."/>
            <person name="Nori F."/>
            <person name="Ohara O."/>
            <person name="Okazaki Y."/>
            <person name="Orlando V."/>
            <person name="Pang K.C."/>
            <person name="Pavan W.J."/>
            <person name="Pavesi G."/>
            <person name="Pesole G."/>
            <person name="Petrovsky N."/>
            <person name="Piazza S."/>
            <person name="Reed J."/>
            <person name="Reid J.F."/>
            <person name="Ring B.Z."/>
            <person name="Ringwald M."/>
            <person name="Rost B."/>
            <person name="Ruan Y."/>
            <person name="Salzberg S.L."/>
            <person name="Sandelin A."/>
            <person name="Schneider C."/>
            <person name="Schoenbach C."/>
            <person name="Sekiguchi K."/>
            <person name="Semple C.A."/>
            <person name="Seno S."/>
            <person name="Sessa L."/>
            <person name="Sheng Y."/>
            <person name="Shibata Y."/>
            <person name="Shimada H."/>
            <person name="Shimada K."/>
            <person name="Silva D."/>
            <person name="Sinclair B."/>
            <person name="Sperling S."/>
            <person name="Stupka E."/>
            <person name="Sugiura K."/>
            <person name="Sultana R."/>
            <person name="Takenaka Y."/>
            <person name="Taki K."/>
            <person name="Tammoja K."/>
            <person name="Tan S.L."/>
            <person name="Tang S."/>
            <person name="Taylor M.S."/>
            <person name="Tegner J."/>
            <person name="Teichmann S.A."/>
            <person name="Ueda H.R."/>
            <person name="van Nimwegen E."/>
            <person name="Verardo R."/>
            <person name="Wei C.L."/>
            <person name="Yagi K."/>
            <person name="Yamanishi H."/>
            <person name="Zabarovsky E."/>
            <person name="Zhu S."/>
            <person name="Zimmer A."/>
            <person name="Hide W."/>
            <person name="Bult C."/>
            <person name="Grimmond S.M."/>
            <person name="Teasdale R.D."/>
            <person name="Liu E.T."/>
            <person name="Brusic V."/>
            <person name="Quackenbush J."/>
            <person name="Wahlestedt C."/>
            <person name="Mattick J.S."/>
            <person name="Hume D.A."/>
            <person name="Kai C."/>
            <person name="Sasaki D."/>
            <person name="Tomaru Y."/>
            <person name="Fukuda S."/>
            <person name="Kanamori-Katayama M."/>
            <person name="Suzuki M."/>
            <person name="Aoki J."/>
            <person name="Arakawa T."/>
            <person name="Iida J."/>
            <person name="Imamura K."/>
            <person name="Itoh M."/>
            <person name="Kato T."/>
            <person name="Kawaji H."/>
            <person name="Kawagashira N."/>
            <person name="Kawashima T."/>
            <person name="Kojima M."/>
            <person name="Kondo S."/>
            <person name="Konno H."/>
            <person name="Nakano K."/>
            <person name="Ninomiya N."/>
            <person name="Nishio T."/>
            <person name="Okada M."/>
            <person name="Plessy C."/>
            <person name="Shibata K."/>
            <person name="Shiraki T."/>
            <person name="Suzuki S."/>
            <person name="Tagami M."/>
            <person name="Waki K."/>
            <person name="Watahiki A."/>
            <person name="Okamura-Oho Y."/>
            <person name="Suzuki H."/>
            <person name="Kawai J."/>
            <person name="Hayashizaki Y."/>
        </authorList>
    </citation>
    <scope>NUCLEOTIDE SEQUENCE [LARGE SCALE MRNA]</scope>
    <source>
        <strain>C57BL/6J</strain>
        <tissue>Cerebellum</tissue>
        <tissue>Hippocampus</tissue>
    </source>
</reference>
<reference key="2">
    <citation type="journal article" date="2004" name="Genome Res.">
        <title>The status, quality, and expansion of the NIH full-length cDNA project: the Mammalian Gene Collection (MGC).</title>
        <authorList>
            <consortium name="The MGC Project Team"/>
        </authorList>
    </citation>
    <scope>NUCLEOTIDE SEQUENCE [LARGE SCALE MRNA]</scope>
    <source>
        <tissue>Eye</tissue>
    </source>
</reference>
<reference key="3">
    <citation type="journal article" date="2010" name="Cell">
        <title>A tissue-specific atlas of mouse protein phosphorylation and expression.</title>
        <authorList>
            <person name="Huttlin E.L."/>
            <person name="Jedrychowski M.P."/>
            <person name="Elias J.E."/>
            <person name="Goswami T."/>
            <person name="Rad R."/>
            <person name="Beausoleil S.A."/>
            <person name="Villen J."/>
            <person name="Haas W."/>
            <person name="Sowa M.E."/>
            <person name="Gygi S.P."/>
        </authorList>
    </citation>
    <scope>IDENTIFICATION BY MASS SPECTROMETRY [LARGE SCALE ANALYSIS]</scope>
    <source>
        <tissue>Brain</tissue>
    </source>
</reference>
<dbReference type="EMBL" id="AK049820">
    <property type="protein sequence ID" value="BAC33934.1"/>
    <property type="molecule type" value="mRNA"/>
</dbReference>
<dbReference type="EMBL" id="AK082080">
    <property type="protein sequence ID" value="BAC38406.1"/>
    <property type="molecule type" value="mRNA"/>
</dbReference>
<dbReference type="EMBL" id="BC017611">
    <property type="protein sequence ID" value="AAH17611.1"/>
    <property type="molecule type" value="mRNA"/>
</dbReference>
<dbReference type="CCDS" id="CCDS26746.1"/>
<dbReference type="RefSeq" id="NP_001347983.1">
    <property type="nucleotide sequence ID" value="NM_001361054.1"/>
</dbReference>
<dbReference type="RefSeq" id="NP_659087.1">
    <property type="nucleotide sequence ID" value="NM_144838.2"/>
</dbReference>
<dbReference type="RefSeq" id="XP_006517673.1">
    <property type="nucleotide sequence ID" value="XM_006517610.2"/>
</dbReference>
<dbReference type="SMR" id="Q8VD33"/>
<dbReference type="BioGRID" id="230046">
    <property type="interactions" value="4"/>
</dbReference>
<dbReference type="FunCoup" id="Q8VD33">
    <property type="interactions" value="1055"/>
</dbReference>
<dbReference type="STRING" id="10090.ENSMUSP00000041307"/>
<dbReference type="GlyGen" id="Q8VD33">
    <property type="glycosylation" value="1 site, 1 N-linked glycan (1 site)"/>
</dbReference>
<dbReference type="iPTMnet" id="Q8VD33"/>
<dbReference type="PhosphoSitePlus" id="Q8VD33"/>
<dbReference type="PaxDb" id="10090-ENSMUSP00000041307"/>
<dbReference type="PeptideAtlas" id="Q8VD33"/>
<dbReference type="ProteomicsDB" id="261207"/>
<dbReference type="Pumba" id="Q8VD33"/>
<dbReference type="Antibodypedia" id="23800">
    <property type="antibodies" value="111 antibodies from 20 providers"/>
</dbReference>
<dbReference type="Ensembl" id="ENSMUST00000044385.14">
    <property type="protein sequence ID" value="ENSMUSP00000041307.8"/>
    <property type="gene ID" value="ENSMUSG00000042743.14"/>
</dbReference>
<dbReference type="GeneID" id="218544"/>
<dbReference type="KEGG" id="mmu:218544"/>
<dbReference type="UCSC" id="uc007rss.1">
    <property type="organism name" value="mouse"/>
</dbReference>
<dbReference type="AGR" id="MGI:2444615"/>
<dbReference type="CTD" id="54557"/>
<dbReference type="MGI" id="MGI:2444615">
    <property type="gene designation" value="Sgtb"/>
</dbReference>
<dbReference type="VEuPathDB" id="HostDB:ENSMUSG00000042743"/>
<dbReference type="eggNOG" id="KOG0553">
    <property type="taxonomic scope" value="Eukaryota"/>
</dbReference>
<dbReference type="GeneTree" id="ENSGT00940000158321"/>
<dbReference type="HOGENOM" id="CLU_044224_0_0_1"/>
<dbReference type="InParanoid" id="Q8VD33"/>
<dbReference type="OMA" id="DMARNMM"/>
<dbReference type="OrthoDB" id="2335338at2759"/>
<dbReference type="PhylomeDB" id="Q8VD33"/>
<dbReference type="TreeFam" id="TF313092"/>
<dbReference type="BioGRID-ORCS" id="218544">
    <property type="hits" value="2 hits in 77 CRISPR screens"/>
</dbReference>
<dbReference type="PRO" id="PR:Q8VD33"/>
<dbReference type="Proteomes" id="UP000000589">
    <property type="component" value="Chromosome 13"/>
</dbReference>
<dbReference type="RNAct" id="Q8VD33">
    <property type="molecule type" value="protein"/>
</dbReference>
<dbReference type="Bgee" id="ENSMUSG00000042743">
    <property type="expression patterns" value="Expressed in substantia nigra and 219 other cell types or tissues"/>
</dbReference>
<dbReference type="ExpressionAtlas" id="Q8VD33">
    <property type="expression patterns" value="baseline and differential"/>
</dbReference>
<dbReference type="GO" id="GO:0030544">
    <property type="term" value="F:Hsp70 protein binding"/>
    <property type="evidence" value="ECO:0007669"/>
    <property type="project" value="Ensembl"/>
</dbReference>
<dbReference type="GO" id="GO:0046982">
    <property type="term" value="F:protein heterodimerization activity"/>
    <property type="evidence" value="ECO:0000266"/>
    <property type="project" value="MGI"/>
</dbReference>
<dbReference type="GO" id="GO:0042803">
    <property type="term" value="F:protein homodimerization activity"/>
    <property type="evidence" value="ECO:0000266"/>
    <property type="project" value="MGI"/>
</dbReference>
<dbReference type="GO" id="GO:0051291">
    <property type="term" value="P:protein heterooligomerization"/>
    <property type="evidence" value="ECO:0007669"/>
    <property type="project" value="Ensembl"/>
</dbReference>
<dbReference type="GO" id="GO:0051260">
    <property type="term" value="P:protein homooligomerization"/>
    <property type="evidence" value="ECO:0007669"/>
    <property type="project" value="Ensembl"/>
</dbReference>
<dbReference type="FunFam" id="1.20.5.420:FF:000002">
    <property type="entry name" value="Small glutamine-rich tetratricopeptide repeat-containing protein alpha"/>
    <property type="match status" value="1"/>
</dbReference>
<dbReference type="FunFam" id="1.25.40.10:FF:000103">
    <property type="entry name" value="small glutamine-rich tetratricopeptide repeat-containing protein beta"/>
    <property type="match status" value="1"/>
</dbReference>
<dbReference type="Gene3D" id="1.20.5.420">
    <property type="entry name" value="Immunoglobulin FC, subunit C"/>
    <property type="match status" value="1"/>
</dbReference>
<dbReference type="Gene3D" id="1.25.40.10">
    <property type="entry name" value="Tetratricopeptide repeat domain"/>
    <property type="match status" value="1"/>
</dbReference>
<dbReference type="InterPro" id="IPR047150">
    <property type="entry name" value="SGT"/>
</dbReference>
<dbReference type="InterPro" id="IPR032374">
    <property type="entry name" value="SGTA_dimer"/>
</dbReference>
<dbReference type="InterPro" id="IPR011990">
    <property type="entry name" value="TPR-like_helical_dom_sf"/>
</dbReference>
<dbReference type="InterPro" id="IPR019734">
    <property type="entry name" value="TPR_rpt"/>
</dbReference>
<dbReference type="PANTHER" id="PTHR45831">
    <property type="entry name" value="LD24721P"/>
    <property type="match status" value="1"/>
</dbReference>
<dbReference type="PANTHER" id="PTHR45831:SF1">
    <property type="entry name" value="SMALL GLUTAMINE-RICH TETRATRICOPEPTIDE REPEAT-CONTAINING PROTEIN BETA"/>
    <property type="match status" value="1"/>
</dbReference>
<dbReference type="Pfam" id="PF16546">
    <property type="entry name" value="SGTA_dimer"/>
    <property type="match status" value="1"/>
</dbReference>
<dbReference type="Pfam" id="PF00515">
    <property type="entry name" value="TPR_1"/>
    <property type="match status" value="1"/>
</dbReference>
<dbReference type="Pfam" id="PF13414">
    <property type="entry name" value="TPR_11"/>
    <property type="match status" value="1"/>
</dbReference>
<dbReference type="SMART" id="SM00028">
    <property type="entry name" value="TPR"/>
    <property type="match status" value="3"/>
</dbReference>
<dbReference type="SUPFAM" id="SSF48452">
    <property type="entry name" value="TPR-like"/>
    <property type="match status" value="1"/>
</dbReference>
<dbReference type="PROSITE" id="PS50005">
    <property type="entry name" value="TPR"/>
    <property type="match status" value="3"/>
</dbReference>
<dbReference type="PROSITE" id="PS50293">
    <property type="entry name" value="TPR_REGION"/>
    <property type="match status" value="1"/>
</dbReference>
<gene>
    <name type="primary">Sgtb</name>
</gene>
<accession>Q8VD33</accession>
<protein>
    <recommendedName>
        <fullName>Small glutamine-rich tetratricopeptide repeat-containing protein beta</fullName>
    </recommendedName>
    <alternativeName>
        <fullName>Beta-SGT</fullName>
    </alternativeName>
</protein>
<proteinExistence type="evidence at protein level"/>
<name>SGTB_MOUSE</name>
<evidence type="ECO:0000250" key="1"/>
<evidence type="ECO:0000250" key="2">
    <source>
        <dbReference type="UniProtKB" id="O43765"/>
    </source>
</evidence>
<evidence type="ECO:0000250" key="3">
    <source>
        <dbReference type="UniProtKB" id="Q96EQ0"/>
    </source>
</evidence>
<evidence type="ECO:0000305" key="4"/>